<organism>
    <name type="scientific">Nitrosopumilus maritimus (strain SCM1)</name>
    <dbReference type="NCBI Taxonomy" id="436308"/>
    <lineage>
        <taxon>Archaea</taxon>
        <taxon>Nitrososphaerota</taxon>
        <taxon>Nitrososphaeria</taxon>
        <taxon>Nitrosopumilales</taxon>
        <taxon>Nitrosopumilaceae</taxon>
        <taxon>Nitrosopumilus</taxon>
    </lineage>
</organism>
<comment type="function">
    <text evidence="1">Forms part of the ribosomal stalk which helps the ribosome interact with GTP-bound translation factors.</text>
</comment>
<comment type="subunit">
    <text evidence="1">Part of the ribosomal stalk of the 50S ribosomal subunit. Interacts with L10 and the large rRNA to form the base of the stalk. L10 forms an elongated spine to which L12 dimers bind in a sequential fashion forming a multimeric L10(L12)X complex.</text>
</comment>
<comment type="similarity">
    <text evidence="1">Belongs to the universal ribosomal protein uL11 family.</text>
</comment>
<name>RL11_NITMS</name>
<evidence type="ECO:0000255" key="1">
    <source>
        <dbReference type="HAMAP-Rule" id="MF_00736"/>
    </source>
</evidence>
<evidence type="ECO:0000305" key="2"/>
<proteinExistence type="inferred from homology"/>
<feature type="chain" id="PRO_1000195758" description="Large ribosomal subunit protein uL11">
    <location>
        <begin position="1"/>
        <end position="159"/>
    </location>
</feature>
<keyword id="KW-1185">Reference proteome</keyword>
<keyword id="KW-0687">Ribonucleoprotein</keyword>
<keyword id="KW-0689">Ribosomal protein</keyword>
<keyword id="KW-0694">RNA-binding</keyword>
<keyword id="KW-0699">rRNA-binding</keyword>
<dbReference type="EMBL" id="CP000866">
    <property type="protein sequence ID" value="ABX12281.1"/>
    <property type="molecule type" value="Genomic_DNA"/>
</dbReference>
<dbReference type="RefSeq" id="WP_012214768.1">
    <property type="nucleotide sequence ID" value="NC_010085.1"/>
</dbReference>
<dbReference type="SMR" id="A9A582"/>
<dbReference type="FunCoup" id="A9A582">
    <property type="interactions" value="177"/>
</dbReference>
<dbReference type="STRING" id="436308.Nmar_0385"/>
<dbReference type="EnsemblBacteria" id="ABX12281">
    <property type="protein sequence ID" value="ABX12281"/>
    <property type="gene ID" value="Nmar_0385"/>
</dbReference>
<dbReference type="GeneID" id="5774317"/>
<dbReference type="KEGG" id="nmr:Nmar_0385"/>
<dbReference type="eggNOG" id="arCOG04372">
    <property type="taxonomic scope" value="Archaea"/>
</dbReference>
<dbReference type="HOGENOM" id="CLU_074237_4_0_2"/>
<dbReference type="InParanoid" id="A9A582"/>
<dbReference type="OrthoDB" id="8842at2157"/>
<dbReference type="PhylomeDB" id="A9A582"/>
<dbReference type="Proteomes" id="UP000000792">
    <property type="component" value="Chromosome"/>
</dbReference>
<dbReference type="GO" id="GO:0015934">
    <property type="term" value="C:large ribosomal subunit"/>
    <property type="evidence" value="ECO:0000318"/>
    <property type="project" value="GO_Central"/>
</dbReference>
<dbReference type="GO" id="GO:0070180">
    <property type="term" value="F:large ribosomal subunit rRNA binding"/>
    <property type="evidence" value="ECO:0000318"/>
    <property type="project" value="GO_Central"/>
</dbReference>
<dbReference type="GO" id="GO:0003735">
    <property type="term" value="F:structural constituent of ribosome"/>
    <property type="evidence" value="ECO:0000318"/>
    <property type="project" value="GO_Central"/>
</dbReference>
<dbReference type="GO" id="GO:0006412">
    <property type="term" value="P:translation"/>
    <property type="evidence" value="ECO:0000318"/>
    <property type="project" value="GO_Central"/>
</dbReference>
<dbReference type="CDD" id="cd00349">
    <property type="entry name" value="Ribosomal_L11"/>
    <property type="match status" value="1"/>
</dbReference>
<dbReference type="FunFam" id="3.30.1550.10:FF:000007">
    <property type="entry name" value="50S ribosomal protein L11"/>
    <property type="match status" value="1"/>
</dbReference>
<dbReference type="Gene3D" id="1.10.10.250">
    <property type="entry name" value="Ribosomal protein L11, C-terminal domain"/>
    <property type="match status" value="1"/>
</dbReference>
<dbReference type="Gene3D" id="3.30.1550.10">
    <property type="entry name" value="Ribosomal protein L11/L12, N-terminal domain"/>
    <property type="match status" value="1"/>
</dbReference>
<dbReference type="HAMAP" id="MF_00736">
    <property type="entry name" value="Ribosomal_uL11"/>
    <property type="match status" value="1"/>
</dbReference>
<dbReference type="InterPro" id="IPR000911">
    <property type="entry name" value="Ribosomal_uL11"/>
</dbReference>
<dbReference type="InterPro" id="IPR020783">
    <property type="entry name" value="Ribosomal_uL11_C"/>
</dbReference>
<dbReference type="InterPro" id="IPR036769">
    <property type="entry name" value="Ribosomal_uL11_C_sf"/>
</dbReference>
<dbReference type="InterPro" id="IPR020784">
    <property type="entry name" value="Ribosomal_uL11_N"/>
</dbReference>
<dbReference type="InterPro" id="IPR036796">
    <property type="entry name" value="Ribosomal_uL11_N_sf"/>
</dbReference>
<dbReference type="NCBIfam" id="NF002232">
    <property type="entry name" value="PRK01143.1"/>
    <property type="match status" value="1"/>
</dbReference>
<dbReference type="PANTHER" id="PTHR11661">
    <property type="entry name" value="60S RIBOSOMAL PROTEIN L12"/>
    <property type="match status" value="1"/>
</dbReference>
<dbReference type="PANTHER" id="PTHR11661:SF1">
    <property type="entry name" value="LARGE RIBOSOMAL SUBUNIT PROTEIN UL11M"/>
    <property type="match status" value="1"/>
</dbReference>
<dbReference type="Pfam" id="PF00298">
    <property type="entry name" value="Ribosomal_L11"/>
    <property type="match status" value="1"/>
</dbReference>
<dbReference type="Pfam" id="PF03946">
    <property type="entry name" value="Ribosomal_L11_N"/>
    <property type="match status" value="1"/>
</dbReference>
<dbReference type="SMART" id="SM00649">
    <property type="entry name" value="RL11"/>
    <property type="match status" value="1"/>
</dbReference>
<dbReference type="SUPFAM" id="SSF54747">
    <property type="entry name" value="Ribosomal L11/L12e N-terminal domain"/>
    <property type="match status" value="1"/>
</dbReference>
<dbReference type="SUPFAM" id="SSF46906">
    <property type="entry name" value="Ribosomal protein L11, C-terminal domain"/>
    <property type="match status" value="1"/>
</dbReference>
<gene>
    <name evidence="1" type="primary">rpl11</name>
    <name type="ordered locus">Nmar_0385</name>
</gene>
<protein>
    <recommendedName>
        <fullName evidence="1">Large ribosomal subunit protein uL11</fullName>
    </recommendedName>
    <alternativeName>
        <fullName evidence="2">50S ribosomal protein L11</fullName>
    </alternativeName>
</protein>
<reference key="1">
    <citation type="journal article" date="2010" name="Proc. Natl. Acad. Sci. U.S.A.">
        <title>Nitrosopumilus maritimus genome reveals unique mechanisms for nitrification and autotrophy in globally distributed marine crenarchaea.</title>
        <authorList>
            <person name="Walker C.B."/>
            <person name="de la Torre J.R."/>
            <person name="Klotz M.G."/>
            <person name="Urakawa H."/>
            <person name="Pinel N."/>
            <person name="Arp D.J."/>
            <person name="Brochier-Armanet C."/>
            <person name="Chain P.S."/>
            <person name="Chan P.P."/>
            <person name="Gollabgir A."/>
            <person name="Hemp J."/>
            <person name="Hugler M."/>
            <person name="Karr E.A."/>
            <person name="Konneke M."/>
            <person name="Shin M."/>
            <person name="Lawton T.J."/>
            <person name="Lowe T."/>
            <person name="Martens-Habbena W."/>
            <person name="Sayavedra-Soto L.A."/>
            <person name="Lang D."/>
            <person name="Sievert S.M."/>
            <person name="Rosenzweig A.C."/>
            <person name="Manning G."/>
            <person name="Stahl D.A."/>
        </authorList>
    </citation>
    <scope>NUCLEOTIDE SEQUENCE [LARGE SCALE GENOMIC DNA]</scope>
    <source>
        <strain>SCM1</strain>
    </source>
</reference>
<sequence>MGEQKISSLVTGGGASAGPPLGPALGPLGVNIMEVINAINDKTKDFEGMKVPVTVIVDSDTKKYEIEIGIPSAAALIMKEAGIQKGSGASGTEWAGDVTMDAVVKVANTKLENSYASSLKSVAKTIVGTCLALGVKVEGKTPKEITAEINEGKWDEKFQ</sequence>
<accession>A9A582</accession>